<proteinExistence type="evidence at protein level"/>
<sequence>MAQRHLWIWFLCLQTWSEAAGKDADPMVMNGILGESVTFLLNIQEPKKIDNIAWTSQSSVAFIKPGVNKAEVTITQGTYKGRIEIIDQKYDLVIRDLRMEDAGTYKADINEENEETITKIYYLHIYRRLKTPKITQSLISSLNNTCNITLTCSVEKEEKDVTYSWSPFGEKSNVLQIVHSPMDQKLTYTCTAQNPVSNSSDSVTVQQPCTDTPSFHPRHAVLPGGLAVLFLLILIPMLAFLFRLYKRRRDRIVLEADDVSKKTVYAVVSRNAQPTESRIYDEIPQSKMLSCKEDPVTTIYSSVQLSEKMKETNMKDRSLPKALGNEIVV</sequence>
<accession>Q18PI6</accession>
<accession>Q18PI7</accession>
<accession>Q3TBT1</accession>
<accession>Q3U0A2</accession>
<accession>Q8BFV0</accession>
<accession>Q9Z178</accession>
<feature type="signal peptide" evidence="1">
    <location>
        <begin position="1"/>
        <end position="21"/>
    </location>
</feature>
<feature type="chain" id="PRO_0000252030" description="SLAM family member 5">
    <location>
        <begin position="22"/>
        <end position="329"/>
    </location>
</feature>
<feature type="topological domain" description="Extracellular" evidence="4">
    <location>
        <begin position="22"/>
        <end position="221"/>
    </location>
</feature>
<feature type="transmembrane region" description="Helical" evidence="4">
    <location>
        <begin position="222"/>
        <end position="242"/>
    </location>
</feature>
<feature type="topological domain" description="Cytoplasmic" evidence="4">
    <location>
        <begin position="243"/>
        <end position="329"/>
    </location>
</feature>
<feature type="domain" description="Ig-like V-type">
    <location>
        <begin position="26"/>
        <end position="129"/>
    </location>
</feature>
<feature type="domain" description="Ig-like C2-type">
    <location>
        <begin position="132"/>
        <end position="206"/>
    </location>
</feature>
<feature type="short sequence motif" description="ITSM 1" evidence="2">
    <location>
        <begin position="263"/>
        <end position="268"/>
    </location>
</feature>
<feature type="short sequence motif" description="ITSM 2" evidence="2">
    <location>
        <begin position="298"/>
        <end position="303"/>
    </location>
</feature>
<feature type="modified residue" description="Phosphotyrosine" evidence="3">
    <location>
        <position position="265"/>
    </location>
</feature>
<feature type="modified residue" description="Phosphotyrosine; by LYN" evidence="3">
    <location>
        <position position="280"/>
    </location>
</feature>
<feature type="modified residue" description="Phosphotyrosine" evidence="3">
    <location>
        <position position="300"/>
    </location>
</feature>
<feature type="glycosylation site" description="N-linked (GlcNAc...) asparagine" evidence="4">
    <location>
        <position position="147"/>
    </location>
</feature>
<feature type="disulfide bond" evidence="5">
    <location>
        <begin position="152"/>
        <end position="190"/>
    </location>
</feature>
<feature type="splice variant" id="VSP_020857" description="In isoform 2." evidence="14">
    <original>RLKTPKITQSLIS</original>
    <variation>KLWQHGALDLLLI</variation>
    <location>
        <begin position="128"/>
        <end position="140"/>
    </location>
</feature>
<feature type="splice variant" id="VSP_020858" description="In isoform 2." evidence="14">
    <location>
        <begin position="141"/>
        <end position="329"/>
    </location>
</feature>
<feature type="splice variant" id="VSP_020859" description="In isoform 3." evidence="14">
    <location>
        <position position="256"/>
    </location>
</feature>
<feature type="sequence variant" evidence="6 8 13">
    <original>E</original>
    <variation>K</variation>
    <location>
        <position position="293"/>
    </location>
</feature>
<feature type="mutagenesis site" description="No effect on macrophage cytokine secretion." evidence="10">
    <original>Y</original>
    <variation>F</variation>
    <location>
        <position position="265"/>
    </location>
</feature>
<feature type="mutagenesis site" description="Modulates macrophage cytokine secretion." evidence="10">
    <original>Y</original>
    <variation>F</variation>
    <location>
        <position position="300"/>
    </location>
</feature>
<feature type="sequence conflict" description="In Ref. 1; AAD02273 and 3; BAC29799/BAC30670/BAE32863." evidence="15" ref="1 3">
    <original>M</original>
    <variation>V</variation>
    <location>
        <position position="27"/>
    </location>
</feature>
<comment type="function">
    <text evidence="3 7 9 10 11 12 15">Self-ligand receptor of the signaling lymphocytic activation molecule (SLAM) family. SLAM receptors triggered by homo- or heterotypic cell-cell interactions are modulating the activation and differentiation of a wide variety of immune cells and thus are involved in the regulation and interconnection of both innate and adaptive immune response. Activities are controlled by presence or absence of small cytoplasmic adapter proteins, SH2D1A/SAP and/or SH2D1B/EAT-2 (PubMed:20962259). Can mediate natural killer (NK) cell cytotoxicity dependent on SH2D1A and SH2D1B (PubMed:20962259). Increases proliferative responses of activated T-cells and SH2D1A/SAP does not seen be required for this process. Homophilic interactions enhance interferon gamma/IFNG secretion in lymphocytes and induce platelet stimulation via a SH2D1A/SAP-dependent pathway. May serve as a marker for hematopoietic progenitor cells (By similarity). Required for a prolonged T-cell:B-cell contact, optimal T follicular helper function, and germinal center formation (PubMed:20153220). In germinal centers involved in maintaining B cell tolerance and in preventing autoimmunity (PubMed:25801429). In mast cells negatively regulates high affinity immunoglobulin epsilon receptor signaling; independent of SH2D1A and SH2D1B but implicating FES and PTPN6/SHP-1 (By similarity). In macrophages enhances LPS-induced MAPK phosphorylation and NF-kappaB activation and modulates LPS-induced cytokine secretion; involving ITSM 2 (PubMed:20628063). Positively regulates macroautophagy in primary dendritic cells via stabilization of IRF8; inhibits TRIM21-mediated proteasomal degradation of IRF8 (By similarity).</text>
</comment>
<comment type="subunit">
    <text evidence="1">Homodimer; via its extracellular domain. Forms a head to tail dimer with a CD48 molecule from another cell. Interacts with SH2 domain-containing proteins SH2D1A/SAP and SH2D1B/EAT-2. Interacts with tyrosine-protein phosphatases PTPN6/SHP-1 and PTPN11/SHP-2 via its phosphorylated cytoplasmic domain, and this interaction is blocked by SH2D1A (By similarity).</text>
</comment>
<comment type="subcellular location">
    <subcellularLocation>
        <location evidence="1">Cell membrane</location>
        <topology evidence="1">Single-pass type I membrane protein</topology>
    </subcellularLocation>
</comment>
<comment type="alternative products">
    <event type="alternative splicing"/>
    <isoform>
        <id>Q18PI6-1</id>
        <name>1</name>
        <sequence type="displayed"/>
    </isoform>
    <isoform>
        <id>Q18PI6-2</id>
        <name>2</name>
        <sequence type="described" ref="VSP_020857 VSP_020858"/>
    </isoform>
    <isoform>
        <id>Q18PI6-3</id>
        <name>3</name>
        <sequence type="described" ref="VSP_020859"/>
    </isoform>
</comment>
<comment type="tissue specificity">
    <text>Predominantly expressed in hematopoietic tissues such as lymph node, spleen, thymus, and bone marrow. Detected also in lung.</text>
</comment>
<comment type="domain">
    <text evidence="2 3">The ITSMs (immunoreceptor tyrosine-based switch motifs) with the consensus sequence T-X-Y-X-X-[VI] present in SLAM family receptors have overlapping specificity for activating and inhibitory SH2 domain-containingbinding partners. Especially they mediate the interaction with the SH2 domain of SH2D1A and SH2D1B. A 'two-out-of-three-pronged' mechanism is proposed involving threonine (position -2), phosphorylated tyrosine (position 0) and valine/isoleucine (position +3).</text>
</comment>
<comment type="PTM">
    <text evidence="3">Phosphorylated by tyrosine-protein kinase LCK on tyrosine residues following ligation induced by agonist monoclonal antibody. The association with SH2D1A/SAP is dependent of tyrosine phosphorylation of its cytoplasmic domain. Phosphorylated on Tyr-280 and Tyr-300 following platelet aggregation. Phosphorylated on tyrosine residues upon high affinity immunoglobulin epsilon receptor aggregation in mast cells.</text>
</comment>
<comment type="PTM">
    <text evidence="1">N-glycosylated.</text>
</comment>
<protein>
    <recommendedName>
        <fullName>SLAM family member 5</fullName>
    </recommendedName>
    <alternativeName>
        <fullName>Leukocyte differentiation antigen CD84</fullName>
    </alternativeName>
    <alternativeName>
        <fullName>Signaling lymphocytic activation molecule 5</fullName>
    </alternativeName>
    <cdAntigenName>CD84</cdAntigenName>
</protein>
<evidence type="ECO:0000250" key="1"/>
<evidence type="ECO:0000250" key="2">
    <source>
        <dbReference type="UniProtKB" id="Q13291"/>
    </source>
</evidence>
<evidence type="ECO:0000250" key="3">
    <source>
        <dbReference type="UniProtKB" id="Q9UIB8"/>
    </source>
</evidence>
<evidence type="ECO:0000255" key="4"/>
<evidence type="ECO:0000255" key="5">
    <source>
        <dbReference type="PROSITE-ProRule" id="PRU00114"/>
    </source>
</evidence>
<evidence type="ECO:0000269" key="6">
    <source>
    </source>
</evidence>
<evidence type="ECO:0000269" key="7">
    <source>
    </source>
</evidence>
<evidence type="ECO:0000269" key="8">
    <source>
    </source>
</evidence>
<evidence type="ECO:0000269" key="9">
    <source>
    </source>
</evidence>
<evidence type="ECO:0000269" key="10">
    <source>
    </source>
</evidence>
<evidence type="ECO:0000269" key="11">
    <source>
    </source>
</evidence>
<evidence type="ECO:0000269" key="12">
    <source>
    </source>
</evidence>
<evidence type="ECO:0000269" key="13">
    <source ref="2"/>
</evidence>
<evidence type="ECO:0000303" key="14">
    <source>
    </source>
</evidence>
<evidence type="ECO:0000305" key="15"/>
<dbReference type="EMBL" id="AF043445">
    <property type="protein sequence ID" value="AAD02273.1"/>
    <property type="molecule type" value="mRNA"/>
</dbReference>
<dbReference type="EMBL" id="AB196812">
    <property type="protein sequence ID" value="BAE96315.1"/>
    <property type="molecule type" value="mRNA"/>
</dbReference>
<dbReference type="EMBL" id="AB196813">
    <property type="protein sequence ID" value="BAE96316.1"/>
    <property type="molecule type" value="mRNA"/>
</dbReference>
<dbReference type="EMBL" id="AB196814">
    <property type="protein sequence ID" value="BAE96317.1"/>
    <property type="molecule type" value="mRNA"/>
</dbReference>
<dbReference type="EMBL" id="AB196815">
    <property type="protein sequence ID" value="BAE96318.1"/>
    <property type="molecule type" value="mRNA"/>
</dbReference>
<dbReference type="EMBL" id="AK037385">
    <property type="protein sequence ID" value="BAC29799.1"/>
    <property type="molecule type" value="mRNA"/>
</dbReference>
<dbReference type="EMBL" id="AK040694">
    <property type="protein sequence ID" value="BAC30670.1"/>
    <property type="molecule type" value="mRNA"/>
</dbReference>
<dbReference type="EMBL" id="AK154834">
    <property type="protein sequence ID" value="BAE32863.1"/>
    <property type="molecule type" value="mRNA"/>
</dbReference>
<dbReference type="EMBL" id="AK156464">
    <property type="protein sequence ID" value="BAE33721.1"/>
    <property type="molecule type" value="mRNA"/>
</dbReference>
<dbReference type="EMBL" id="AK157075">
    <property type="protein sequence ID" value="BAE33953.1"/>
    <property type="molecule type" value="mRNA"/>
</dbReference>
<dbReference type="EMBL" id="AK171067">
    <property type="protein sequence ID" value="BAE42226.1"/>
    <property type="molecule type" value="mRNA"/>
</dbReference>
<dbReference type="CCDS" id="CCDS15503.1">
    <molecule id="Q18PI6-1"/>
</dbReference>
<dbReference type="CCDS" id="CCDS56657.1">
    <molecule id="Q18PI6-2"/>
</dbReference>
<dbReference type="CCDS" id="CCDS69979.1">
    <molecule id="Q18PI6-3"/>
</dbReference>
<dbReference type="RefSeq" id="NP_001239401.1">
    <property type="nucleotide sequence ID" value="NM_001252472.1"/>
</dbReference>
<dbReference type="RefSeq" id="NP_038517.1">
    <property type="nucleotide sequence ID" value="NM_013489.3"/>
</dbReference>
<dbReference type="SMR" id="Q18PI6"/>
<dbReference type="FunCoup" id="Q18PI6">
    <property type="interactions" value="385"/>
</dbReference>
<dbReference type="STRING" id="10090.ENSMUSP00000120881"/>
<dbReference type="GlyCosmos" id="Q18PI6">
    <property type="glycosylation" value="1 site, No reported glycans"/>
</dbReference>
<dbReference type="GlyGen" id="Q18PI6">
    <property type="glycosylation" value="1 site"/>
</dbReference>
<dbReference type="iPTMnet" id="Q18PI6"/>
<dbReference type="PhosphoSitePlus" id="Q18PI6"/>
<dbReference type="CPTAC" id="non-CPTAC-4062"/>
<dbReference type="PaxDb" id="10090-ENSMUSP00000120881"/>
<dbReference type="PeptideAtlas" id="Q18PI6"/>
<dbReference type="ProteomicsDB" id="261070">
    <molecule id="Q18PI6-1"/>
</dbReference>
<dbReference type="ProteomicsDB" id="261071">
    <molecule id="Q18PI6-2"/>
</dbReference>
<dbReference type="ProteomicsDB" id="261072">
    <molecule id="Q18PI6-3"/>
</dbReference>
<dbReference type="DNASU" id="12523"/>
<dbReference type="GeneID" id="12523"/>
<dbReference type="KEGG" id="mmu:12523"/>
<dbReference type="UCSC" id="uc007dpd.3">
    <molecule id="Q18PI6-2"/>
    <property type="organism name" value="mouse"/>
</dbReference>
<dbReference type="AGR" id="MGI:1336885"/>
<dbReference type="CTD" id="8832"/>
<dbReference type="MGI" id="MGI:1336885">
    <property type="gene designation" value="Cd84"/>
</dbReference>
<dbReference type="eggNOG" id="ENOG502SB7W">
    <property type="taxonomic scope" value="Eukaryota"/>
</dbReference>
<dbReference type="InParanoid" id="Q18PI6"/>
<dbReference type="OrthoDB" id="8741746at2759"/>
<dbReference type="TreeFam" id="TF334964"/>
<dbReference type="Reactome" id="R-MMU-202733">
    <property type="pathway name" value="Cell surface interactions at the vascular wall"/>
</dbReference>
<dbReference type="BioGRID-ORCS" id="12523">
    <property type="hits" value="0 hits in 78 CRISPR screens"/>
</dbReference>
<dbReference type="ChiTaRS" id="Cd84">
    <property type="organism name" value="mouse"/>
</dbReference>
<dbReference type="PRO" id="PR:Q18PI6"/>
<dbReference type="Proteomes" id="UP000000589">
    <property type="component" value="Unplaced"/>
</dbReference>
<dbReference type="RNAct" id="Q18PI6">
    <property type="molecule type" value="protein"/>
</dbReference>
<dbReference type="GO" id="GO:0005886">
    <property type="term" value="C:plasma membrane"/>
    <property type="evidence" value="ECO:0007669"/>
    <property type="project" value="UniProtKB-SubCell"/>
</dbReference>
<dbReference type="GO" id="GO:0002250">
    <property type="term" value="P:adaptive immune response"/>
    <property type="evidence" value="ECO:0007669"/>
    <property type="project" value="UniProtKB-KW"/>
</dbReference>
<dbReference type="GO" id="GO:0006914">
    <property type="term" value="P:autophagy"/>
    <property type="evidence" value="ECO:0007669"/>
    <property type="project" value="UniProtKB-KW"/>
</dbReference>
<dbReference type="GO" id="GO:0007155">
    <property type="term" value="P:cell adhesion"/>
    <property type="evidence" value="ECO:0007669"/>
    <property type="project" value="UniProtKB-KW"/>
</dbReference>
<dbReference type="GO" id="GO:0045087">
    <property type="term" value="P:innate immune response"/>
    <property type="evidence" value="ECO:0007669"/>
    <property type="project" value="UniProtKB-KW"/>
</dbReference>
<dbReference type="GO" id="GO:0032693">
    <property type="term" value="P:negative regulation of interleukin-10 production"/>
    <property type="evidence" value="ECO:0000314"/>
    <property type="project" value="UniProtKB"/>
</dbReference>
<dbReference type="GO" id="GO:0032715">
    <property type="term" value="P:negative regulation of interleukin-6 production"/>
    <property type="evidence" value="ECO:0000314"/>
    <property type="project" value="UniProtKB"/>
</dbReference>
<dbReference type="GO" id="GO:0043410">
    <property type="term" value="P:positive regulation of MAPK cascade"/>
    <property type="evidence" value="ECO:0000314"/>
    <property type="project" value="UniProtKB"/>
</dbReference>
<dbReference type="GO" id="GO:0071639">
    <property type="term" value="P:positive regulation of monocyte chemotactic protein-1 production"/>
    <property type="evidence" value="ECO:0000314"/>
    <property type="project" value="UniProtKB"/>
</dbReference>
<dbReference type="GO" id="GO:0051092">
    <property type="term" value="P:positive regulation of NF-kappaB transcription factor activity"/>
    <property type="evidence" value="ECO:0000314"/>
    <property type="project" value="UniProtKB"/>
</dbReference>
<dbReference type="GO" id="GO:0032760">
    <property type="term" value="P:positive regulation of tumor necrosis factor production"/>
    <property type="evidence" value="ECO:0000314"/>
    <property type="project" value="UniProtKB"/>
</dbReference>
<dbReference type="GO" id="GO:0031664">
    <property type="term" value="P:regulation of lipopolysaccharide-mediated signaling pathway"/>
    <property type="evidence" value="ECO:0000314"/>
    <property type="project" value="UniProtKB"/>
</dbReference>
<dbReference type="GO" id="GO:0043030">
    <property type="term" value="P:regulation of macrophage activation"/>
    <property type="evidence" value="ECO:0000314"/>
    <property type="project" value="UniProtKB"/>
</dbReference>
<dbReference type="CDD" id="cd16842">
    <property type="entry name" value="Ig_SLAM-like_N"/>
    <property type="match status" value="1"/>
</dbReference>
<dbReference type="FunFam" id="2.60.40.10:FF:000470">
    <property type="entry name" value="SLAM family member 7"/>
    <property type="match status" value="1"/>
</dbReference>
<dbReference type="FunFam" id="2.60.40.10:FF:000820">
    <property type="entry name" value="SLAM family member 7"/>
    <property type="match status" value="1"/>
</dbReference>
<dbReference type="Gene3D" id="2.60.40.10">
    <property type="entry name" value="Immunoglobulins"/>
    <property type="match status" value="2"/>
</dbReference>
<dbReference type="InterPro" id="IPR015631">
    <property type="entry name" value="CD2/SLAM_rcpt"/>
</dbReference>
<dbReference type="InterPro" id="IPR007110">
    <property type="entry name" value="Ig-like_dom"/>
</dbReference>
<dbReference type="InterPro" id="IPR036179">
    <property type="entry name" value="Ig-like_dom_sf"/>
</dbReference>
<dbReference type="InterPro" id="IPR013783">
    <property type="entry name" value="Ig-like_fold"/>
</dbReference>
<dbReference type="InterPro" id="IPR003599">
    <property type="entry name" value="Ig_sub"/>
</dbReference>
<dbReference type="InterPro" id="IPR013106">
    <property type="entry name" value="Ig_V-set"/>
</dbReference>
<dbReference type="PANTHER" id="PTHR12080">
    <property type="entry name" value="SIGNALING LYMPHOCYTIC ACTIVATION MOLECULE"/>
    <property type="match status" value="1"/>
</dbReference>
<dbReference type="PANTHER" id="PTHR12080:SF103">
    <property type="entry name" value="SLAM FAMILY MEMBER 5"/>
    <property type="match status" value="1"/>
</dbReference>
<dbReference type="Pfam" id="PF07686">
    <property type="entry name" value="V-set"/>
    <property type="match status" value="1"/>
</dbReference>
<dbReference type="SMART" id="SM00409">
    <property type="entry name" value="IG"/>
    <property type="match status" value="2"/>
</dbReference>
<dbReference type="SUPFAM" id="SSF48726">
    <property type="entry name" value="Immunoglobulin"/>
    <property type="match status" value="2"/>
</dbReference>
<dbReference type="PROSITE" id="PS50835">
    <property type="entry name" value="IG_LIKE"/>
    <property type="match status" value="1"/>
</dbReference>
<organism>
    <name type="scientific">Mus musculus</name>
    <name type="common">Mouse</name>
    <dbReference type="NCBI Taxonomy" id="10090"/>
    <lineage>
        <taxon>Eukaryota</taxon>
        <taxon>Metazoa</taxon>
        <taxon>Chordata</taxon>
        <taxon>Craniata</taxon>
        <taxon>Vertebrata</taxon>
        <taxon>Euteleostomi</taxon>
        <taxon>Mammalia</taxon>
        <taxon>Eutheria</taxon>
        <taxon>Euarchontoglires</taxon>
        <taxon>Glires</taxon>
        <taxon>Rodentia</taxon>
        <taxon>Myomorpha</taxon>
        <taxon>Muroidea</taxon>
        <taxon>Muridae</taxon>
        <taxon>Murinae</taxon>
        <taxon>Mus</taxon>
        <taxon>Mus</taxon>
    </lineage>
</organism>
<name>SLAF5_MOUSE</name>
<reference key="1">
    <citation type="journal article" date="1999" name="Immunogenetics">
        <title>Molecular cloning, characterization, and chromosomal localization of the mouse homologue of CD84, a member of the CD2 family of cell surface molecules.</title>
        <authorList>
            <person name="de la Fuente M.A."/>
            <person name="Tovar V."/>
            <person name="Pizcueta P."/>
            <person name="Nadal M."/>
            <person name="Bosch J."/>
            <person name="Engel P."/>
        </authorList>
    </citation>
    <scope>NUCLEOTIDE SEQUENCE [MRNA] (ISOFORM 1)</scope>
    <scope>VARIANT LYS-293</scope>
    <source>
        <tissue>Peritoneal macrophage</tissue>
    </source>
</reference>
<reference key="2">
    <citation type="submission" date="2004-12" db="EMBL/GenBank/DDBJ databases">
        <title>Polymorphisms of SLAM family receptor genes.</title>
        <authorList>
            <person name="Furukawa H."/>
            <person name="Ono M."/>
        </authorList>
    </citation>
    <scope>NUCLEOTIDE SEQUENCE [MRNA] (ISOFORM 1)</scope>
    <scope>VARIANT LYS-293</scope>
    <source>
        <strain>BXSB/MpJ</strain>
        <strain>MRL/MpJ</strain>
        <strain>NZB/BlNJ</strain>
        <strain>NZW/LacJ</strain>
    </source>
</reference>
<reference key="3">
    <citation type="journal article" date="2005" name="Science">
        <title>The transcriptional landscape of the mammalian genome.</title>
        <authorList>
            <person name="Carninci P."/>
            <person name="Kasukawa T."/>
            <person name="Katayama S."/>
            <person name="Gough J."/>
            <person name="Frith M.C."/>
            <person name="Maeda N."/>
            <person name="Oyama R."/>
            <person name="Ravasi T."/>
            <person name="Lenhard B."/>
            <person name="Wells C."/>
            <person name="Kodzius R."/>
            <person name="Shimokawa K."/>
            <person name="Bajic V.B."/>
            <person name="Brenner S.E."/>
            <person name="Batalov S."/>
            <person name="Forrest A.R."/>
            <person name="Zavolan M."/>
            <person name="Davis M.J."/>
            <person name="Wilming L.G."/>
            <person name="Aidinis V."/>
            <person name="Allen J.E."/>
            <person name="Ambesi-Impiombato A."/>
            <person name="Apweiler R."/>
            <person name="Aturaliya R.N."/>
            <person name="Bailey T.L."/>
            <person name="Bansal M."/>
            <person name="Baxter L."/>
            <person name="Beisel K.W."/>
            <person name="Bersano T."/>
            <person name="Bono H."/>
            <person name="Chalk A.M."/>
            <person name="Chiu K.P."/>
            <person name="Choudhary V."/>
            <person name="Christoffels A."/>
            <person name="Clutterbuck D.R."/>
            <person name="Crowe M.L."/>
            <person name="Dalla E."/>
            <person name="Dalrymple B.P."/>
            <person name="de Bono B."/>
            <person name="Della Gatta G."/>
            <person name="di Bernardo D."/>
            <person name="Down T."/>
            <person name="Engstrom P."/>
            <person name="Fagiolini M."/>
            <person name="Faulkner G."/>
            <person name="Fletcher C.F."/>
            <person name="Fukushima T."/>
            <person name="Furuno M."/>
            <person name="Futaki S."/>
            <person name="Gariboldi M."/>
            <person name="Georgii-Hemming P."/>
            <person name="Gingeras T.R."/>
            <person name="Gojobori T."/>
            <person name="Green R.E."/>
            <person name="Gustincich S."/>
            <person name="Harbers M."/>
            <person name="Hayashi Y."/>
            <person name="Hensch T.K."/>
            <person name="Hirokawa N."/>
            <person name="Hill D."/>
            <person name="Huminiecki L."/>
            <person name="Iacono M."/>
            <person name="Ikeo K."/>
            <person name="Iwama A."/>
            <person name="Ishikawa T."/>
            <person name="Jakt M."/>
            <person name="Kanapin A."/>
            <person name="Katoh M."/>
            <person name="Kawasawa Y."/>
            <person name="Kelso J."/>
            <person name="Kitamura H."/>
            <person name="Kitano H."/>
            <person name="Kollias G."/>
            <person name="Krishnan S.P."/>
            <person name="Kruger A."/>
            <person name="Kummerfeld S.K."/>
            <person name="Kurochkin I.V."/>
            <person name="Lareau L.F."/>
            <person name="Lazarevic D."/>
            <person name="Lipovich L."/>
            <person name="Liu J."/>
            <person name="Liuni S."/>
            <person name="McWilliam S."/>
            <person name="Madan Babu M."/>
            <person name="Madera M."/>
            <person name="Marchionni L."/>
            <person name="Matsuda H."/>
            <person name="Matsuzawa S."/>
            <person name="Miki H."/>
            <person name="Mignone F."/>
            <person name="Miyake S."/>
            <person name="Morris K."/>
            <person name="Mottagui-Tabar S."/>
            <person name="Mulder N."/>
            <person name="Nakano N."/>
            <person name="Nakauchi H."/>
            <person name="Ng P."/>
            <person name="Nilsson R."/>
            <person name="Nishiguchi S."/>
            <person name="Nishikawa S."/>
            <person name="Nori F."/>
            <person name="Ohara O."/>
            <person name="Okazaki Y."/>
            <person name="Orlando V."/>
            <person name="Pang K.C."/>
            <person name="Pavan W.J."/>
            <person name="Pavesi G."/>
            <person name="Pesole G."/>
            <person name="Petrovsky N."/>
            <person name="Piazza S."/>
            <person name="Reed J."/>
            <person name="Reid J.F."/>
            <person name="Ring B.Z."/>
            <person name="Ringwald M."/>
            <person name="Rost B."/>
            <person name="Ruan Y."/>
            <person name="Salzberg S.L."/>
            <person name="Sandelin A."/>
            <person name="Schneider C."/>
            <person name="Schoenbach C."/>
            <person name="Sekiguchi K."/>
            <person name="Semple C.A."/>
            <person name="Seno S."/>
            <person name="Sessa L."/>
            <person name="Sheng Y."/>
            <person name="Shibata Y."/>
            <person name="Shimada H."/>
            <person name="Shimada K."/>
            <person name="Silva D."/>
            <person name="Sinclair B."/>
            <person name="Sperling S."/>
            <person name="Stupka E."/>
            <person name="Sugiura K."/>
            <person name="Sultana R."/>
            <person name="Takenaka Y."/>
            <person name="Taki K."/>
            <person name="Tammoja K."/>
            <person name="Tan S.L."/>
            <person name="Tang S."/>
            <person name="Taylor M.S."/>
            <person name="Tegner J."/>
            <person name="Teichmann S.A."/>
            <person name="Ueda H.R."/>
            <person name="van Nimwegen E."/>
            <person name="Verardo R."/>
            <person name="Wei C.L."/>
            <person name="Yagi K."/>
            <person name="Yamanishi H."/>
            <person name="Zabarovsky E."/>
            <person name="Zhu S."/>
            <person name="Zimmer A."/>
            <person name="Hide W."/>
            <person name="Bult C."/>
            <person name="Grimmond S.M."/>
            <person name="Teasdale R.D."/>
            <person name="Liu E.T."/>
            <person name="Brusic V."/>
            <person name="Quackenbush J."/>
            <person name="Wahlestedt C."/>
            <person name="Mattick J.S."/>
            <person name="Hume D.A."/>
            <person name="Kai C."/>
            <person name="Sasaki D."/>
            <person name="Tomaru Y."/>
            <person name="Fukuda S."/>
            <person name="Kanamori-Katayama M."/>
            <person name="Suzuki M."/>
            <person name="Aoki J."/>
            <person name="Arakawa T."/>
            <person name="Iida J."/>
            <person name="Imamura K."/>
            <person name="Itoh M."/>
            <person name="Kato T."/>
            <person name="Kawaji H."/>
            <person name="Kawagashira N."/>
            <person name="Kawashima T."/>
            <person name="Kojima M."/>
            <person name="Kondo S."/>
            <person name="Konno H."/>
            <person name="Nakano K."/>
            <person name="Ninomiya N."/>
            <person name="Nishio T."/>
            <person name="Okada M."/>
            <person name="Plessy C."/>
            <person name="Shibata K."/>
            <person name="Shiraki T."/>
            <person name="Suzuki S."/>
            <person name="Tagami M."/>
            <person name="Waki K."/>
            <person name="Watahiki A."/>
            <person name="Okamura-Oho Y."/>
            <person name="Suzuki H."/>
            <person name="Kawai J."/>
            <person name="Hayashizaki Y."/>
        </authorList>
    </citation>
    <scope>NUCLEOTIDE SEQUENCE [LARGE SCALE MRNA] (ISOFORMS 1; 2 AND 3)</scope>
    <scope>VARIANT LYS-293</scope>
    <source>
        <strain>NOD</strain>
    </source>
</reference>
<reference key="4">
    <citation type="journal article" date="2001" name="EMBO J.">
        <title>Structural basis for the interaction of the free SH2 domain EAT-2 with SLAM receptors in hematopoietic cells.</title>
        <authorList>
            <person name="Morra M."/>
            <person name="Lu J."/>
            <person name="Poy F."/>
            <person name="Martin M."/>
            <person name="Sayos J."/>
            <person name="Calpe S."/>
            <person name="Gullo C."/>
            <person name="Howie D."/>
            <person name="Rietdijk S."/>
            <person name="Thompson A."/>
            <person name="Coyle A.J."/>
            <person name="Denny C."/>
            <person name="Yaffe M.B."/>
            <person name="Engel P."/>
            <person name="Eck M.J."/>
            <person name="Terhorst C."/>
        </authorList>
    </citation>
    <scope>INTERACTION WITH SH2D1B</scope>
</reference>
<reference key="5">
    <citation type="journal article" date="2005" name="Blood">
        <title>Platelet aggregation induces platelet aggregate stability via SLAM family receptor signaling.</title>
        <authorList>
            <person name="Nanda N."/>
            <person name="Andre P."/>
            <person name="Bao M."/>
            <person name="Clauser K."/>
            <person name="Deguzman F."/>
            <person name="Howie D."/>
            <person name="Conley P.B."/>
            <person name="Terhorst C."/>
            <person name="Phillips D.R."/>
        </authorList>
    </citation>
    <scope>FUNCTION</scope>
</reference>
<reference key="6">
    <citation type="journal article" date="2010" name="Cell">
        <title>A tissue-specific atlas of mouse protein phosphorylation and expression.</title>
        <authorList>
            <person name="Huttlin E.L."/>
            <person name="Jedrychowski M.P."/>
            <person name="Elias J.E."/>
            <person name="Goswami T."/>
            <person name="Rad R."/>
            <person name="Beausoleil S.A."/>
            <person name="Villen J."/>
            <person name="Haas W."/>
            <person name="Sowa M.E."/>
            <person name="Gygi S.P."/>
        </authorList>
    </citation>
    <scope>IDENTIFICATION BY MASS SPECTROMETRY [LARGE SCALE ANALYSIS]</scope>
    <source>
        <tissue>Spleen</tissue>
    </source>
</reference>
<reference key="7">
    <citation type="journal article" date="2010" name="Immunity">
        <title>Optimal germinal center responses require a multistage T cell:B cell adhesion process involving integrins, SLAM-associated protein, and CD84.</title>
        <authorList>
            <person name="Cannons J.L."/>
            <person name="Qi H."/>
            <person name="Lu K.T."/>
            <person name="Dutta M."/>
            <person name="Gomez-Rodriguez J."/>
            <person name="Cheng J."/>
            <person name="Wakeland E.K."/>
            <person name="Germain R.N."/>
            <person name="Schwartzberg P.L."/>
        </authorList>
    </citation>
    <scope>FUNCTION</scope>
</reference>
<reference key="8">
    <citation type="journal article" date="2010" name="J. Immunol.">
        <title>The adapters EAT-2A and -2B are positive regulators of CD244- and CD84-dependent NK cell functions in the C57BL/6 mouse.</title>
        <authorList>
            <person name="Wang N."/>
            <person name="Calpe S."/>
            <person name="Westcott J."/>
            <person name="Castro W."/>
            <person name="Ma C."/>
            <person name="Engel P."/>
            <person name="Schatzle J.D."/>
            <person name="Terhorst C."/>
        </authorList>
    </citation>
    <scope>FUNCTION</scope>
</reference>
<reference key="9">
    <citation type="journal article" date="2010" name="J. Leukoc. Biol.">
        <title>Mouse CD84 is a pan-leukocyte cell-surface molecule that modulates LPS-induced cytokine secretion by macrophages.</title>
        <authorList>
            <person name="Sintes J."/>
            <person name="Romero X."/>
            <person name="de Salort J."/>
            <person name="Terhorst C."/>
            <person name="Engel P."/>
        </authorList>
    </citation>
    <scope>FUNCTION</scope>
    <scope>MUTAGENESIS OF TYR-265 AND TYR-300</scope>
</reference>
<reference key="10">
    <citation type="journal article" date="2015" name="J. Immunol.">
        <title>B cell-intrinsic CD84 and Ly108 maintain germinal center B cell tolerance.</title>
        <authorList>
            <person name="Wong E.B."/>
            <person name="Soni C."/>
            <person name="Chan A.Y."/>
            <person name="Domeier P.P."/>
            <person name="Shwetank V."/>
            <person name="Abraham T."/>
            <person name="Limaye N."/>
            <person name="Khan T.N."/>
            <person name="Elias M.J."/>
            <person name="Chodisetti S.B."/>
            <person name="Wakeland E.K."/>
            <person name="Rahman Z.S."/>
        </authorList>
    </citation>
    <scope>FUNCTION</scope>
</reference>
<keyword id="KW-1064">Adaptive immunity</keyword>
<keyword id="KW-0025">Alternative splicing</keyword>
<keyword id="KW-0072">Autophagy</keyword>
<keyword id="KW-0130">Cell adhesion</keyword>
<keyword id="KW-1003">Cell membrane</keyword>
<keyword id="KW-1015">Disulfide bond</keyword>
<keyword id="KW-0325">Glycoprotein</keyword>
<keyword id="KW-0391">Immunity</keyword>
<keyword id="KW-0393">Immunoglobulin domain</keyword>
<keyword id="KW-0399">Innate immunity</keyword>
<keyword id="KW-0472">Membrane</keyword>
<keyword id="KW-0597">Phosphoprotein</keyword>
<keyword id="KW-0675">Receptor</keyword>
<keyword id="KW-1185">Reference proteome</keyword>
<keyword id="KW-0677">Repeat</keyword>
<keyword id="KW-0732">Signal</keyword>
<keyword id="KW-0812">Transmembrane</keyword>
<keyword id="KW-1133">Transmembrane helix</keyword>
<gene>
    <name type="primary">Cd84</name>
    <name type="synonym">Slamf5</name>
</gene>